<geneLocation type="mitochondrion"/>
<dbReference type="EMBL" id="AB026818">
    <property type="protein sequence ID" value="BAA93672.1"/>
    <property type="molecule type" value="Genomic_DNA"/>
</dbReference>
<dbReference type="RefSeq" id="NP_054682.1">
    <property type="nucleotide sequence ID" value="NC_002197.1"/>
</dbReference>
<dbReference type="SMR" id="Q9MR49"/>
<dbReference type="GeneID" id="809221"/>
<dbReference type="CTD" id="4519"/>
<dbReference type="GO" id="GO:0005743">
    <property type="term" value="C:mitochondrial inner membrane"/>
    <property type="evidence" value="ECO:0007669"/>
    <property type="project" value="UniProtKB-SubCell"/>
</dbReference>
<dbReference type="GO" id="GO:0045275">
    <property type="term" value="C:respiratory chain complex III"/>
    <property type="evidence" value="ECO:0007669"/>
    <property type="project" value="InterPro"/>
</dbReference>
<dbReference type="GO" id="GO:0046872">
    <property type="term" value="F:metal ion binding"/>
    <property type="evidence" value="ECO:0007669"/>
    <property type="project" value="UniProtKB-KW"/>
</dbReference>
<dbReference type="GO" id="GO:0008121">
    <property type="term" value="F:ubiquinol-cytochrome-c reductase activity"/>
    <property type="evidence" value="ECO:0007669"/>
    <property type="project" value="InterPro"/>
</dbReference>
<dbReference type="GO" id="GO:0006122">
    <property type="term" value="P:mitochondrial electron transport, ubiquinol to cytochrome c"/>
    <property type="evidence" value="ECO:0007669"/>
    <property type="project" value="TreeGrafter"/>
</dbReference>
<dbReference type="CDD" id="cd00290">
    <property type="entry name" value="cytochrome_b_C"/>
    <property type="match status" value="1"/>
</dbReference>
<dbReference type="CDD" id="cd00284">
    <property type="entry name" value="Cytochrome_b_N"/>
    <property type="match status" value="1"/>
</dbReference>
<dbReference type="FunFam" id="1.20.810.10:FF:000002">
    <property type="entry name" value="Cytochrome b"/>
    <property type="match status" value="1"/>
</dbReference>
<dbReference type="Gene3D" id="1.20.810.10">
    <property type="entry name" value="Cytochrome Bc1 Complex, Chain C"/>
    <property type="match status" value="1"/>
</dbReference>
<dbReference type="InterPro" id="IPR005798">
    <property type="entry name" value="Cyt_b/b6_C"/>
</dbReference>
<dbReference type="InterPro" id="IPR036150">
    <property type="entry name" value="Cyt_b/b6_C_sf"/>
</dbReference>
<dbReference type="InterPro" id="IPR005797">
    <property type="entry name" value="Cyt_b/b6_N"/>
</dbReference>
<dbReference type="InterPro" id="IPR027387">
    <property type="entry name" value="Cytb/b6-like_sf"/>
</dbReference>
<dbReference type="InterPro" id="IPR030689">
    <property type="entry name" value="Cytochrome_b"/>
</dbReference>
<dbReference type="InterPro" id="IPR048260">
    <property type="entry name" value="Cytochrome_b_C_euk/bac"/>
</dbReference>
<dbReference type="InterPro" id="IPR048259">
    <property type="entry name" value="Cytochrome_b_N_euk/bac"/>
</dbReference>
<dbReference type="InterPro" id="IPR016174">
    <property type="entry name" value="Di-haem_cyt_TM"/>
</dbReference>
<dbReference type="PANTHER" id="PTHR19271">
    <property type="entry name" value="CYTOCHROME B"/>
    <property type="match status" value="1"/>
</dbReference>
<dbReference type="PANTHER" id="PTHR19271:SF16">
    <property type="entry name" value="CYTOCHROME B"/>
    <property type="match status" value="1"/>
</dbReference>
<dbReference type="Pfam" id="PF00032">
    <property type="entry name" value="Cytochrom_B_C"/>
    <property type="match status" value="1"/>
</dbReference>
<dbReference type="Pfam" id="PF00033">
    <property type="entry name" value="Cytochrome_B"/>
    <property type="match status" value="1"/>
</dbReference>
<dbReference type="PIRSF" id="PIRSF038885">
    <property type="entry name" value="COB"/>
    <property type="match status" value="1"/>
</dbReference>
<dbReference type="SUPFAM" id="SSF81648">
    <property type="entry name" value="a domain/subunit of cytochrome bc1 complex (Ubiquinol-cytochrome c reductase)"/>
    <property type="match status" value="1"/>
</dbReference>
<dbReference type="SUPFAM" id="SSF81342">
    <property type="entry name" value="Transmembrane di-heme cytochromes"/>
    <property type="match status" value="1"/>
</dbReference>
<dbReference type="PROSITE" id="PS51003">
    <property type="entry name" value="CYTB_CTER"/>
    <property type="match status" value="1"/>
</dbReference>
<dbReference type="PROSITE" id="PS51002">
    <property type="entry name" value="CYTB_NTER"/>
    <property type="match status" value="1"/>
</dbReference>
<sequence>MAPNIRKSHPLLKMVNNSLIDLPTPSNISTWWNFGSLLGICLTMQILTGLLLATHYTADTTLAFSSVAHTCRDVQYGWLIRNLHANGASFFFICIYLHIGRGFYYGSYLYKETWNTGVILLLTLMATAFVGYVLPWGQMSFWGATVITNLFSAIPYIGQTLVEWAWGGFSVDNPTLTRFFALHFLLPFAIAGLTLIHLTFLHESGSNNPLGIVSNCDKIPFHPYFSLKDILGLTLLLLPLTTLALFSPNLLGDPENFTPANPLVTPPHIKPEWYFLFAYAILRSIPNKLGGVLALAASVLILFLCPLLHKSKQRTMAFRPLSQLLFWTLTANLLILTWVGSQPVEHPFIIIGQLASLTYFFTLLILFPIAGALENKLLNY</sequence>
<evidence type="ECO:0000250" key="1"/>
<evidence type="ECO:0000250" key="2">
    <source>
        <dbReference type="UniProtKB" id="P00157"/>
    </source>
</evidence>
<evidence type="ECO:0000255" key="3">
    <source>
        <dbReference type="PROSITE-ProRule" id="PRU00967"/>
    </source>
</evidence>
<evidence type="ECO:0000255" key="4">
    <source>
        <dbReference type="PROSITE-ProRule" id="PRU00968"/>
    </source>
</evidence>
<proteinExistence type="inferred from homology"/>
<feature type="chain" id="PRO_0000060788" description="Cytochrome b">
    <location>
        <begin position="1"/>
        <end position="380"/>
    </location>
</feature>
<feature type="transmembrane region" description="Helical" evidence="2">
    <location>
        <begin position="34"/>
        <end position="54"/>
    </location>
</feature>
<feature type="transmembrane region" description="Helical" evidence="2">
    <location>
        <begin position="78"/>
        <end position="99"/>
    </location>
</feature>
<feature type="transmembrane region" description="Helical" evidence="2">
    <location>
        <begin position="114"/>
        <end position="134"/>
    </location>
</feature>
<feature type="transmembrane region" description="Helical" evidence="2">
    <location>
        <begin position="179"/>
        <end position="199"/>
    </location>
</feature>
<feature type="transmembrane region" description="Helical" evidence="2">
    <location>
        <begin position="227"/>
        <end position="247"/>
    </location>
</feature>
<feature type="transmembrane region" description="Helical" evidence="2">
    <location>
        <begin position="289"/>
        <end position="309"/>
    </location>
</feature>
<feature type="transmembrane region" description="Helical" evidence="2">
    <location>
        <begin position="321"/>
        <end position="341"/>
    </location>
</feature>
<feature type="transmembrane region" description="Helical" evidence="2">
    <location>
        <begin position="348"/>
        <end position="368"/>
    </location>
</feature>
<feature type="binding site" description="axial binding residue" evidence="2">
    <location>
        <position position="84"/>
    </location>
    <ligand>
        <name>heme b</name>
        <dbReference type="ChEBI" id="CHEBI:60344"/>
        <label>b562</label>
    </ligand>
    <ligandPart>
        <name>Fe</name>
        <dbReference type="ChEBI" id="CHEBI:18248"/>
    </ligandPart>
</feature>
<feature type="binding site" description="axial binding residue" evidence="2">
    <location>
        <position position="98"/>
    </location>
    <ligand>
        <name>heme b</name>
        <dbReference type="ChEBI" id="CHEBI:60344"/>
        <label>b566</label>
    </ligand>
    <ligandPart>
        <name>Fe</name>
        <dbReference type="ChEBI" id="CHEBI:18248"/>
    </ligandPart>
</feature>
<feature type="binding site" description="axial binding residue" evidence="2">
    <location>
        <position position="183"/>
    </location>
    <ligand>
        <name>heme b</name>
        <dbReference type="ChEBI" id="CHEBI:60344"/>
        <label>b562</label>
    </ligand>
    <ligandPart>
        <name>Fe</name>
        <dbReference type="ChEBI" id="CHEBI:18248"/>
    </ligandPart>
</feature>
<feature type="binding site" description="axial binding residue" evidence="2">
    <location>
        <position position="197"/>
    </location>
    <ligand>
        <name>heme b</name>
        <dbReference type="ChEBI" id="CHEBI:60344"/>
        <label>b566</label>
    </ligand>
    <ligandPart>
        <name>Fe</name>
        <dbReference type="ChEBI" id="CHEBI:18248"/>
    </ligandPart>
</feature>
<feature type="binding site" evidence="2">
    <location>
        <position position="202"/>
    </location>
    <ligand>
        <name>a ubiquinone</name>
        <dbReference type="ChEBI" id="CHEBI:16389"/>
    </ligand>
</feature>
<reference key="1">
    <citation type="submission" date="1999-04" db="EMBL/GenBank/DDBJ databases">
        <title>Mitochondrial genome of Ciconia ciconia.</title>
        <authorList>
            <person name="Yamamoto Y."/>
        </authorList>
    </citation>
    <scope>NUCLEOTIDE SEQUENCE [GENOMIC DNA]</scope>
</reference>
<comment type="function">
    <text evidence="2">Component of the ubiquinol-cytochrome c reductase complex (complex III or cytochrome b-c1 complex) that is part of the mitochondrial respiratory chain. The b-c1 complex mediates electron transfer from ubiquinol to cytochrome c. Contributes to the generation of a proton gradient across the mitochondrial membrane that is then used for ATP synthesis.</text>
</comment>
<comment type="cofactor">
    <cofactor evidence="2">
        <name>heme b</name>
        <dbReference type="ChEBI" id="CHEBI:60344"/>
    </cofactor>
    <text evidence="2">Binds 2 heme b groups non-covalently.</text>
</comment>
<comment type="subunit">
    <text evidence="2">The cytochrome bc1 complex contains 11 subunits: 3 respiratory subunits (MT-CYB, CYC1 and UQCRFS1), 2 core proteins (UQCRC1 and UQCRC2) and 6 low-molecular weight proteins (UQCRH/QCR6, UQCRB/QCR7, UQCRQ/QCR8, UQCR10/QCR9, UQCR11/QCR10 and a cleavage product of UQCRFS1). This cytochrome bc1 complex then forms a dimer.</text>
</comment>
<comment type="subcellular location">
    <subcellularLocation>
        <location evidence="2">Mitochondrion inner membrane</location>
        <topology evidence="2">Multi-pass membrane protein</topology>
    </subcellularLocation>
</comment>
<comment type="miscellaneous">
    <text evidence="1">Heme 1 (or BL or b562) is low-potential and absorbs at about 562 nm, and heme 2 (or BH or b566) is high-potential and absorbs at about 566 nm.</text>
</comment>
<comment type="similarity">
    <text evidence="3 4">Belongs to the cytochrome b family.</text>
</comment>
<comment type="caution">
    <text evidence="2">The full-length protein contains only eight transmembrane helices, not nine as predicted by bioinformatics tools.</text>
</comment>
<keyword id="KW-0249">Electron transport</keyword>
<keyword id="KW-0349">Heme</keyword>
<keyword id="KW-0408">Iron</keyword>
<keyword id="KW-0472">Membrane</keyword>
<keyword id="KW-0479">Metal-binding</keyword>
<keyword id="KW-0496">Mitochondrion</keyword>
<keyword id="KW-0999">Mitochondrion inner membrane</keyword>
<keyword id="KW-0679">Respiratory chain</keyword>
<keyword id="KW-0812">Transmembrane</keyword>
<keyword id="KW-1133">Transmembrane helix</keyword>
<keyword id="KW-0813">Transport</keyword>
<keyword id="KW-0830">Ubiquinone</keyword>
<name>CYB_CICCI</name>
<accession>Q9MR49</accession>
<protein>
    <recommendedName>
        <fullName>Cytochrome b</fullName>
    </recommendedName>
    <alternativeName>
        <fullName>Complex III subunit 3</fullName>
    </alternativeName>
    <alternativeName>
        <fullName>Complex III subunit III</fullName>
    </alternativeName>
    <alternativeName>
        <fullName>Cytochrome b-c1 complex subunit 3</fullName>
    </alternativeName>
    <alternativeName>
        <fullName>Ubiquinol-cytochrome-c reductase complex cytochrome b subunit</fullName>
    </alternativeName>
</protein>
<organism>
    <name type="scientific">Ciconia ciconia</name>
    <name type="common">White stork</name>
    <dbReference type="NCBI Taxonomy" id="8928"/>
    <lineage>
        <taxon>Eukaryota</taxon>
        <taxon>Metazoa</taxon>
        <taxon>Chordata</taxon>
        <taxon>Craniata</taxon>
        <taxon>Vertebrata</taxon>
        <taxon>Euteleostomi</taxon>
        <taxon>Archelosauria</taxon>
        <taxon>Archosauria</taxon>
        <taxon>Dinosauria</taxon>
        <taxon>Saurischia</taxon>
        <taxon>Theropoda</taxon>
        <taxon>Coelurosauria</taxon>
        <taxon>Aves</taxon>
        <taxon>Neognathae</taxon>
        <taxon>Neoaves</taxon>
        <taxon>Aequornithes</taxon>
        <taxon>Ciconiiformes</taxon>
        <taxon>Ciconiidae</taxon>
        <taxon>Ciconia</taxon>
    </lineage>
</organism>
<gene>
    <name type="primary">MT-CYB</name>
    <name type="synonym">COB</name>
    <name type="synonym">CYTB</name>
    <name type="synonym">MTCYB</name>
</gene>